<comment type="function">
    <text evidence="4 5">Galactose-specific adhesion protein essential for non-sexual flocculation and filamentous growth. Required for adhesion and filamentous growth through recognition of galactose residues on cell surface glycoconjugates (PubMed:22098069). Induces flocculation when overexpressed (PubMed:23236291).</text>
</comment>
<comment type="subcellular location">
    <subcellularLocation>
        <location evidence="1">Cell membrane</location>
        <topology evidence="1">Lipid-anchor</topology>
        <topology evidence="1">GPI-anchor</topology>
    </subcellularLocation>
</comment>
<comment type="disruption phenotype">
    <text evidence="4">Abolishes adhesion and invasive growth.</text>
</comment>
<comment type="similarity">
    <text evidence="8">Belongs to the mam3/map4 family.</text>
</comment>
<protein>
    <recommendedName>
        <fullName evidence="8">Galactose-specific cell agglutination protein gsf2</fullName>
    </recommendedName>
    <alternativeName>
        <fullName evidence="6">Galactose-specific flocculin</fullName>
    </alternativeName>
    <alternativeName>
        <fullName evidence="7">Pombe flocculin 1</fullName>
    </alternativeName>
</protein>
<organism>
    <name type="scientific">Schizosaccharomyces pombe (strain 972 / ATCC 24843)</name>
    <name type="common">Fission yeast</name>
    <dbReference type="NCBI Taxonomy" id="284812"/>
    <lineage>
        <taxon>Eukaryota</taxon>
        <taxon>Fungi</taxon>
        <taxon>Dikarya</taxon>
        <taxon>Ascomycota</taxon>
        <taxon>Taphrinomycotina</taxon>
        <taxon>Schizosaccharomycetes</taxon>
        <taxon>Schizosaccharomycetales</taxon>
        <taxon>Schizosaccharomycetaceae</taxon>
        <taxon>Schizosaccharomyces</taxon>
    </lineage>
</organism>
<name>GSF2_SCHPO</name>
<evidence type="ECO:0000255" key="1"/>
<evidence type="ECO:0000255" key="2">
    <source>
        <dbReference type="PROSITE-ProRule" id="PRU00498"/>
    </source>
</evidence>
<evidence type="ECO:0000256" key="3">
    <source>
        <dbReference type="SAM" id="MobiDB-lite"/>
    </source>
</evidence>
<evidence type="ECO:0000269" key="4">
    <source>
    </source>
</evidence>
<evidence type="ECO:0000269" key="5">
    <source>
    </source>
</evidence>
<evidence type="ECO:0000303" key="6">
    <source>
    </source>
</evidence>
<evidence type="ECO:0000303" key="7">
    <source>
    </source>
</evidence>
<evidence type="ECO:0000305" key="8"/>
<evidence type="ECO:0000305" key="9">
    <source>
    </source>
</evidence>
<evidence type="ECO:0000312" key="10">
    <source>
        <dbReference type="PomBase" id="SPCC1742.01"/>
    </source>
</evidence>
<accession>Q9P6S0</accession>
<accession>O59777</accession>
<accession>Q96WU8</accession>
<reference key="1">
    <citation type="journal article" date="2002" name="Nature">
        <title>The genome sequence of Schizosaccharomyces pombe.</title>
        <authorList>
            <person name="Wood V."/>
            <person name="Gwilliam R."/>
            <person name="Rajandream M.A."/>
            <person name="Lyne M.H."/>
            <person name="Lyne R."/>
            <person name="Stewart A."/>
            <person name="Sgouros J.G."/>
            <person name="Peat N."/>
            <person name="Hayles J."/>
            <person name="Baker S.G."/>
            <person name="Basham D."/>
            <person name="Bowman S."/>
            <person name="Brooks K."/>
            <person name="Brown D."/>
            <person name="Brown S."/>
            <person name="Chillingworth T."/>
            <person name="Churcher C.M."/>
            <person name="Collins M."/>
            <person name="Connor R."/>
            <person name="Cronin A."/>
            <person name="Davis P."/>
            <person name="Feltwell T."/>
            <person name="Fraser A."/>
            <person name="Gentles S."/>
            <person name="Goble A."/>
            <person name="Hamlin N."/>
            <person name="Harris D.E."/>
            <person name="Hidalgo J."/>
            <person name="Hodgson G."/>
            <person name="Holroyd S."/>
            <person name="Hornsby T."/>
            <person name="Howarth S."/>
            <person name="Huckle E.J."/>
            <person name="Hunt S."/>
            <person name="Jagels K."/>
            <person name="James K.D."/>
            <person name="Jones L."/>
            <person name="Jones M."/>
            <person name="Leather S."/>
            <person name="McDonald S."/>
            <person name="McLean J."/>
            <person name="Mooney P."/>
            <person name="Moule S."/>
            <person name="Mungall K.L."/>
            <person name="Murphy L.D."/>
            <person name="Niblett D."/>
            <person name="Odell C."/>
            <person name="Oliver K."/>
            <person name="O'Neil S."/>
            <person name="Pearson D."/>
            <person name="Quail M.A."/>
            <person name="Rabbinowitsch E."/>
            <person name="Rutherford K.M."/>
            <person name="Rutter S."/>
            <person name="Saunders D."/>
            <person name="Seeger K."/>
            <person name="Sharp S."/>
            <person name="Skelton J."/>
            <person name="Simmonds M.N."/>
            <person name="Squares R."/>
            <person name="Squares S."/>
            <person name="Stevens K."/>
            <person name="Taylor K."/>
            <person name="Taylor R.G."/>
            <person name="Tivey A."/>
            <person name="Walsh S.V."/>
            <person name="Warren T."/>
            <person name="Whitehead S."/>
            <person name="Woodward J.R."/>
            <person name="Volckaert G."/>
            <person name="Aert R."/>
            <person name="Robben J."/>
            <person name="Grymonprez B."/>
            <person name="Weltjens I."/>
            <person name="Vanstreels E."/>
            <person name="Rieger M."/>
            <person name="Schaefer M."/>
            <person name="Mueller-Auer S."/>
            <person name="Gabel C."/>
            <person name="Fuchs M."/>
            <person name="Duesterhoeft A."/>
            <person name="Fritzc C."/>
            <person name="Holzer E."/>
            <person name="Moestl D."/>
            <person name="Hilbert H."/>
            <person name="Borzym K."/>
            <person name="Langer I."/>
            <person name="Beck A."/>
            <person name="Lehrach H."/>
            <person name="Reinhardt R."/>
            <person name="Pohl T.M."/>
            <person name="Eger P."/>
            <person name="Zimmermann W."/>
            <person name="Wedler H."/>
            <person name="Wambutt R."/>
            <person name="Purnelle B."/>
            <person name="Goffeau A."/>
            <person name="Cadieu E."/>
            <person name="Dreano S."/>
            <person name="Gloux S."/>
            <person name="Lelaure V."/>
            <person name="Mottier S."/>
            <person name="Galibert F."/>
            <person name="Aves S.J."/>
            <person name="Xiang Z."/>
            <person name="Hunt C."/>
            <person name="Moore K."/>
            <person name="Hurst S.M."/>
            <person name="Lucas M."/>
            <person name="Rochet M."/>
            <person name="Gaillardin C."/>
            <person name="Tallada V.A."/>
            <person name="Garzon A."/>
            <person name="Thode G."/>
            <person name="Daga R.R."/>
            <person name="Cruzado L."/>
            <person name="Jimenez J."/>
            <person name="Sanchez M."/>
            <person name="del Rey F."/>
            <person name="Benito J."/>
            <person name="Dominguez A."/>
            <person name="Revuelta J.L."/>
            <person name="Moreno S."/>
            <person name="Armstrong J."/>
            <person name="Forsburg S.L."/>
            <person name="Cerutti L."/>
            <person name="Lowe T."/>
            <person name="McCombie W.R."/>
            <person name="Paulsen I."/>
            <person name="Potashkin J."/>
            <person name="Shpakovski G.V."/>
            <person name="Ussery D."/>
            <person name="Barrell B.G."/>
            <person name="Nurse P."/>
        </authorList>
    </citation>
    <scope>NUCLEOTIDE SEQUENCE [LARGE SCALE GENOMIC DNA]</scope>
    <source>
        <strain>972 / ATCC 24843</strain>
    </source>
</reference>
<reference key="2">
    <citation type="journal article" date="2011" name="Mol. Microbiol.">
        <title>Identification of a galactose-specific flocculin essential for non-sexual flocculation and filamentous growth in Schizosaccharomyces pombe.</title>
        <authorList>
            <person name="Matsuzawa T."/>
            <person name="Morita T."/>
            <person name="Tanaka N."/>
            <person name="Tohda H."/>
            <person name="Takegawa K."/>
        </authorList>
    </citation>
    <scope>FUNCTION</scope>
    <scope>DISRUPTION PHENOTYPE</scope>
    <scope>REPEATS</scope>
</reference>
<reference key="3">
    <citation type="journal article" date="2012" name="PLoS Genet.">
        <title>Deciphering the transcriptional-regulatory network of flocculation in Schizosaccharomyces pombe.</title>
        <authorList>
            <person name="Kwon E.J."/>
            <person name="Laderoute A."/>
            <person name="Chatfield-Reed K."/>
            <person name="Vachon L."/>
            <person name="Karagiannis J."/>
            <person name="Chua G."/>
        </authorList>
    </citation>
    <scope>FUNCTION</scope>
</reference>
<sequence>MSVRRFLSTSARALLFTAALLPSLTSGLPSGNVRILQKGMEPEDYLSSASQNEVPHDISLPKTELADPNFLVDDMPTLLGRDAAVDPSMFTSTFTVKNGNDANYITASPVSNDASMTAISTFTSGKEASYAIQASPSTFLPDSTTTSGSQVSNAVEASSTFVADTTSTSCNPATVLIVTTSGSTSTSCPPPTTILIVTVPTTTTTTTVGYPGSVTTTLTGTPSNGTVIDTVEVPTTTNYGYTTITTGYTGSTTLTTTVPHSGNETGPTTVYVETPYPTTVTTTTTVGYPGSVTTTLTGAPSNGTVIDTVEVPTTTNYGYTTVTTGYTGSTTLTTTVPHSGNETGPTTVYVETPYPTTVTTTTTVGYPGSVTTTLTGAPSNGTVIDTVEVPTTTNYGYTTVTTGYTGSTTLTTTVPHSGNETGPTTVYVETPYPTTVTTTTTVGYPGSVTTTLTGAPSNGTVIDTVEIPTTTNYGYTTITTGYTGSTTLTTTVPHSGNETGPTTVYVETPYPTTVTTTTTVGYPGSVTTTLTGAPSNGTVIDTVEVPTTTNYGYTTITTGYTGSTTLTTTVPHSGNETGPTTVYVETPYPTTVTTTTTVGYPGSVTTTLTGAPSNGTVIDTVEVPTTTNYGYTTVTTGYTGSTTLTTTVPHSGNETGPTTVYVETPYPTTVTTTTTVGYSGSVTTTLTGSGSNSIVTETVDVPTTTSVNYGYTTITTGWTGSTTLTSIVTHSGSETGPTTVYIETPSVSATTTTTTIGYSGSLTTTLTGSSGPVVTNTVEIPYGNSSYIIPTTIVTGTVTTVTTGYTGTETSTVTVIPTGTTGTTTVVIQTPTTVTATETDIVTVTTGYTGTETSTVTVTPTGTSTGTTTVVIQTPTTVTATETDIVTVTTGYTGTETSTVTVTPTGTSTGTTTVVIQTPTTVTATETDIVTVTTGYTGTETSTVTVTPTGTSTGTTTVVIQTPTTVTATETDIVTVTTGYTGTETSTVTVTPTGTSTGTTTVVIQTPTTVTATETDIVTVTTGYTGTETSTVTVTPTGTSTGTTTVVIQTPTTVTATETDIVTVTTGYTGTETSTVTVTPTGTSTGTTTVVIQTPTTVTATETDIVTVTTGYTGTETSTVTVTPTGTATGTTTVVINTPTTTGSEVLPTTGATGTAGTETQLTTATEVQPTTGATGTAGTETQVTTGTETQATTATETQATTATEVQTTTGATGTAGTETQATTATEVQPTTGATGTAGTETQVTTATEVQPTTGATGTAGTETQVTTGTETQATTATETQATTATEVQTTTGATGTAGTETQATTATEVQPTTGATGTAGTETQVTTATEVQPTTGATGTAGTETQVTTGTETQATTATETQATTATEVQTTTGATGTAGTETQVTTATEVQPTTAVTETSSSGYYTTIVSSTVVSTVVPGSTVYPVTHVTTTTGVSGESSAFTYTTSSTQYEPSTVVTTSYYTTSVYTSAPATETVSSTEAPESSTVTSNPIYQGSGTSTWSTVRQWNGSATYNYTYYTTGGFTGGNNTNVTGLYPSSAGANKPIAYLTFVSLFVYIVTLI</sequence>
<keyword id="KW-1003">Cell membrane</keyword>
<keyword id="KW-0325">Glycoprotein</keyword>
<keyword id="KW-0336">GPI-anchor</keyword>
<keyword id="KW-0449">Lipoprotein</keyword>
<keyword id="KW-0472">Membrane</keyword>
<keyword id="KW-1185">Reference proteome</keyword>
<keyword id="KW-0677">Repeat</keyword>
<keyword id="KW-0732">Signal</keyword>
<dbReference type="EMBL" id="CU329672">
    <property type="protein sequence ID" value="CAC39326.2"/>
    <property type="molecule type" value="Genomic_DNA"/>
</dbReference>
<dbReference type="PIR" id="T41130">
    <property type="entry name" value="T41130"/>
</dbReference>
<dbReference type="RefSeq" id="NP_588031.3">
    <property type="nucleotide sequence ID" value="NM_001023022.3"/>
</dbReference>
<dbReference type="BioGRID" id="275855">
    <property type="interactions" value="13"/>
</dbReference>
<dbReference type="STRING" id="284812.Q9P6S0"/>
<dbReference type="GlyCosmos" id="Q9P6S0">
    <property type="glycosylation" value="17 sites, No reported glycans"/>
</dbReference>
<dbReference type="iPTMnet" id="Q9P6S0"/>
<dbReference type="PaxDb" id="4896-SPCC1742.01.1"/>
<dbReference type="EnsemblFungi" id="SPCC1742.01.1">
    <property type="protein sequence ID" value="SPCC1742.01.1:pep"/>
    <property type="gene ID" value="SPCC1742.01"/>
</dbReference>
<dbReference type="GeneID" id="2539287"/>
<dbReference type="KEGG" id="spo:2539287"/>
<dbReference type="PomBase" id="SPCC1742.01">
    <property type="gene designation" value="gsf2"/>
</dbReference>
<dbReference type="VEuPathDB" id="FungiDB:SPCC1742.01"/>
<dbReference type="eggNOG" id="ENOG502QQXP">
    <property type="taxonomic scope" value="Eukaryota"/>
</dbReference>
<dbReference type="HOGENOM" id="CLU_245825_0_0_1"/>
<dbReference type="InParanoid" id="Q9P6S0"/>
<dbReference type="OMA" id="NHDSVDY"/>
<dbReference type="PRO" id="PR:Q9P6S0"/>
<dbReference type="Proteomes" id="UP000002485">
    <property type="component" value="Chromosome III"/>
</dbReference>
<dbReference type="GO" id="GO:0009897">
    <property type="term" value="C:external side of plasma membrane"/>
    <property type="evidence" value="ECO:0000303"/>
    <property type="project" value="PomBase"/>
</dbReference>
<dbReference type="GO" id="GO:0098631">
    <property type="term" value="F:cell adhesion mediator activity"/>
    <property type="evidence" value="ECO:0000304"/>
    <property type="project" value="PomBase"/>
</dbReference>
<dbReference type="GO" id="GO:0036349">
    <property type="term" value="P:galactose-specific flocculation"/>
    <property type="evidence" value="ECO:0000315"/>
    <property type="project" value="PomBase"/>
</dbReference>
<gene>
    <name evidence="6" type="primary">gsf2</name>
    <name evidence="7" type="synonym">pfl1</name>
    <name evidence="10" type="ORF">SPCC1742.01</name>
    <name type="ORF">SPCC1795.13</name>
    <name type="ORF">SPCPB16A4.07c</name>
</gene>
<proteinExistence type="inferred from homology"/>
<feature type="signal peptide" evidence="1">
    <location>
        <begin position="1"/>
        <end position="27"/>
    </location>
</feature>
<feature type="chain" id="PRO_0000014207" description="Galactose-specific cell agglutination protein gsf2">
    <location>
        <begin position="28"/>
        <end position="1539"/>
    </location>
</feature>
<feature type="propeptide" id="PRO_0000014208" description="Removed in mature form" evidence="1">
    <location>
        <begin position="1540"/>
        <end position="1563"/>
    </location>
</feature>
<feature type="repeat" description="1-1" evidence="9">
    <location>
        <begin position="203"/>
        <end position="280"/>
    </location>
</feature>
<feature type="repeat" description="1-2" evidence="9">
    <location>
        <begin position="281"/>
        <end position="358"/>
    </location>
</feature>
<feature type="repeat" description="1-3" evidence="9">
    <location>
        <begin position="359"/>
        <end position="436"/>
    </location>
</feature>
<feature type="repeat" description="1-4" evidence="9">
    <location>
        <begin position="437"/>
        <end position="514"/>
    </location>
</feature>
<feature type="repeat" description="1-5" evidence="9">
    <location>
        <begin position="515"/>
        <end position="592"/>
    </location>
</feature>
<feature type="repeat" description="1-6" evidence="9">
    <location>
        <begin position="593"/>
        <end position="670"/>
    </location>
</feature>
<feature type="repeat" description="1-7" evidence="9">
    <location>
        <begin position="671"/>
        <end position="750"/>
    </location>
</feature>
<feature type="repeat" description="1-8" evidence="9">
    <location>
        <begin position="751"/>
        <end position="825"/>
    </location>
</feature>
<feature type="repeat" description="2-1" evidence="9">
    <location>
        <begin position="826"/>
        <end position="869"/>
    </location>
</feature>
<feature type="repeat" description="2-2" evidence="9">
    <location>
        <begin position="870"/>
        <end position="913"/>
    </location>
</feature>
<feature type="repeat" description="2-3" evidence="9">
    <location>
        <begin position="914"/>
        <end position="957"/>
    </location>
</feature>
<feature type="repeat" description="2-4" evidence="9">
    <location>
        <begin position="958"/>
        <end position="1001"/>
    </location>
</feature>
<feature type="repeat" description="2-5" evidence="9">
    <location>
        <begin position="1002"/>
        <end position="1045"/>
    </location>
</feature>
<feature type="repeat" description="2-6" evidence="9">
    <location>
        <begin position="1046"/>
        <end position="1089"/>
    </location>
</feature>
<feature type="repeat" description="2-7" evidence="9">
    <location>
        <begin position="1090"/>
        <end position="1133"/>
    </location>
</feature>
<feature type="repeat" description="2-8" evidence="9">
    <location>
        <begin position="1134"/>
        <end position="1140"/>
    </location>
</feature>
<feature type="repeat" description="3-1" evidence="8">
    <location>
        <begin position="1141"/>
        <end position="1162"/>
    </location>
</feature>
<feature type="repeat" description="3-2" evidence="8">
    <location>
        <begin position="1163"/>
        <end position="1184"/>
    </location>
</feature>
<feature type="repeat" description="3-3" evidence="8">
    <location>
        <begin position="1185"/>
        <end position="1200"/>
    </location>
</feature>
<feature type="repeat" description="3-4" evidence="8">
    <location>
        <begin position="1201"/>
        <end position="1221"/>
    </location>
</feature>
<feature type="repeat" description="3-5" evidence="8">
    <location>
        <begin position="1223"/>
        <end position="1244"/>
    </location>
</feature>
<feature type="repeat" description="3-6" evidence="8">
    <location>
        <begin position="1245"/>
        <end position="1266"/>
    </location>
</feature>
<feature type="repeat" description="3-7" evidence="8">
    <location>
        <begin position="1267"/>
        <end position="1282"/>
    </location>
</feature>
<feature type="repeat" description="3-8" evidence="8">
    <location>
        <begin position="1283"/>
        <end position="1304"/>
    </location>
</feature>
<feature type="repeat" description="3-9" evidence="8">
    <location>
        <begin position="1305"/>
        <end position="1326"/>
    </location>
</feature>
<feature type="repeat" description="3-10" evidence="8">
    <location>
        <begin position="1327"/>
        <end position="1348"/>
    </location>
</feature>
<feature type="repeat" description="3-11" evidence="8">
    <location>
        <begin position="1349"/>
        <end position="1364"/>
    </location>
</feature>
<feature type="repeat" description="3-12" evidence="8">
    <location>
        <begin position="1365"/>
        <end position="1386"/>
    </location>
</feature>
<feature type="repeat" description="3-13" evidence="8">
    <location>
        <begin position="1387"/>
        <end position="1397"/>
    </location>
</feature>
<feature type="region of interest" description="8 X 78 AA approximate tandem repeats" evidence="9">
    <location>
        <begin position="203"/>
        <end position="825"/>
    </location>
</feature>
<feature type="region of interest" description="8 X 44 AA approximate tandem repeats" evidence="9">
    <location>
        <begin position="826"/>
        <end position="1140"/>
    </location>
</feature>
<feature type="region of interest" description="Disordered" evidence="3">
    <location>
        <begin position="1135"/>
        <end position="1393"/>
    </location>
</feature>
<feature type="region of interest" description="13 X 22 AA approximate tandem repeats" evidence="8">
    <location>
        <begin position="1141"/>
        <end position="1397"/>
    </location>
</feature>
<feature type="lipid moiety-binding region" description="GPI-anchor amidated serine" evidence="1">
    <location>
        <position position="1539"/>
    </location>
</feature>
<feature type="glycosylation site" description="N-linked (GlcNAc...) asparagine" evidence="2">
    <location>
        <position position="224"/>
    </location>
</feature>
<feature type="glycosylation site" description="N-linked (GlcNAc...) asparagine" evidence="2">
    <location>
        <position position="263"/>
    </location>
</feature>
<feature type="glycosylation site" description="N-linked (GlcNAc...) asparagine" evidence="2">
    <location>
        <position position="302"/>
    </location>
</feature>
<feature type="glycosylation site" description="N-linked (GlcNAc...) asparagine" evidence="2">
    <location>
        <position position="341"/>
    </location>
</feature>
<feature type="glycosylation site" description="N-linked (GlcNAc...) asparagine" evidence="2">
    <location>
        <position position="380"/>
    </location>
</feature>
<feature type="glycosylation site" description="N-linked (GlcNAc...) asparagine" evidence="2">
    <location>
        <position position="419"/>
    </location>
</feature>
<feature type="glycosylation site" description="N-linked (GlcNAc...) asparagine" evidence="2">
    <location>
        <position position="458"/>
    </location>
</feature>
<feature type="glycosylation site" description="N-linked (GlcNAc...) asparagine" evidence="2">
    <location>
        <position position="497"/>
    </location>
</feature>
<feature type="glycosylation site" description="N-linked (GlcNAc...) asparagine" evidence="2">
    <location>
        <position position="536"/>
    </location>
</feature>
<feature type="glycosylation site" description="N-linked (GlcNAc...) asparagine" evidence="2">
    <location>
        <position position="575"/>
    </location>
</feature>
<feature type="glycosylation site" description="N-linked (GlcNAc...) asparagine" evidence="2">
    <location>
        <position position="614"/>
    </location>
</feature>
<feature type="glycosylation site" description="N-linked (GlcNAc...) asparagine" evidence="2">
    <location>
        <position position="653"/>
    </location>
</feature>
<feature type="glycosylation site" description="N-linked (GlcNAc...) asparagine" evidence="2">
    <location>
        <position position="784"/>
    </location>
</feature>
<feature type="glycosylation site" description="N-linked (GlcNAc...) asparagine" evidence="2">
    <location>
        <position position="1510"/>
    </location>
</feature>
<feature type="glycosylation site" description="N-linked (GlcNAc...) asparagine" evidence="2">
    <location>
        <position position="1516"/>
    </location>
</feature>
<feature type="glycosylation site" description="N-linked (GlcNAc...) asparagine" evidence="2">
    <location>
        <position position="1529"/>
    </location>
</feature>
<feature type="glycosylation site" description="N-linked (GlcNAc...) asparagine" evidence="2">
    <location>
        <position position="1532"/>
    </location>
</feature>